<name>LSI3_ORYSJ</name>
<feature type="chain" id="PRO_0000440949" description="Silicon efflux transporter LSI3">
    <location>
        <begin position="1"/>
        <end position="485"/>
    </location>
</feature>
<feature type="transmembrane region" description="Helical" evidence="1">
    <location>
        <begin position="14"/>
        <end position="34"/>
    </location>
</feature>
<feature type="transmembrane region" description="Helical" evidence="1">
    <location>
        <begin position="37"/>
        <end position="57"/>
    </location>
</feature>
<feature type="transmembrane region" description="Helical" evidence="1">
    <location>
        <begin position="59"/>
        <end position="79"/>
    </location>
</feature>
<feature type="transmembrane region" description="Helical" evidence="1">
    <location>
        <begin position="106"/>
        <end position="126"/>
    </location>
</feature>
<feature type="transmembrane region" description="Helical" evidence="1">
    <location>
        <begin position="180"/>
        <end position="200"/>
    </location>
</feature>
<feature type="transmembrane region" description="Helical" evidence="1">
    <location>
        <begin position="283"/>
        <end position="303"/>
    </location>
</feature>
<feature type="transmembrane region" description="Helical" evidence="1">
    <location>
        <begin position="336"/>
        <end position="356"/>
    </location>
</feature>
<feature type="transmembrane region" description="Helical" evidence="1">
    <location>
        <begin position="377"/>
        <end position="397"/>
    </location>
</feature>
<feature type="transmembrane region" description="Helical" evidence="1">
    <location>
        <begin position="418"/>
        <end position="438"/>
    </location>
</feature>
<feature type="transmembrane region" description="Helical" evidence="1">
    <location>
        <begin position="461"/>
        <end position="481"/>
    </location>
</feature>
<feature type="region of interest" description="Disordered" evidence="2">
    <location>
        <begin position="233"/>
        <end position="261"/>
    </location>
</feature>
<feature type="compositionally biased region" description="Basic and acidic residues" evidence="2">
    <location>
        <begin position="233"/>
        <end position="242"/>
    </location>
</feature>
<dbReference type="EMBL" id="LC069370">
    <property type="protein sequence ID" value="BAS18932.1"/>
    <property type="molecule type" value="mRNA"/>
</dbReference>
<dbReference type="EMBL" id="AC025783">
    <property type="protein sequence ID" value="AAK20045.1"/>
    <property type="molecule type" value="Genomic_DNA"/>
</dbReference>
<dbReference type="EMBL" id="DP000086">
    <property type="protein sequence ID" value="AAP54895.1"/>
    <property type="molecule type" value="Genomic_DNA"/>
</dbReference>
<dbReference type="EMBL" id="AP008216">
    <property type="protein sequence ID" value="BAF27134.1"/>
    <property type="molecule type" value="Genomic_DNA"/>
</dbReference>
<dbReference type="EMBL" id="AP014966">
    <property type="protein sequence ID" value="BAT11916.1"/>
    <property type="molecule type" value="Genomic_DNA"/>
</dbReference>
<dbReference type="EMBL" id="AK070040">
    <property type="protein sequence ID" value="BAG91738.1"/>
    <property type="molecule type" value="mRNA"/>
</dbReference>
<dbReference type="SMR" id="Q9AV23"/>
<dbReference type="FunCoup" id="Q9AV23">
    <property type="interactions" value="6"/>
</dbReference>
<dbReference type="STRING" id="39947.Q9AV23"/>
<dbReference type="PaxDb" id="39947-Q9AV23"/>
<dbReference type="EnsemblPlants" id="Os10t0547500-01">
    <property type="protein sequence ID" value="Os10t0547500-01"/>
    <property type="gene ID" value="Os10g0547500"/>
</dbReference>
<dbReference type="GeneID" id="4349293"/>
<dbReference type="Gramene" id="Os10t0547500-01">
    <property type="protein sequence ID" value="Os10t0547500-01"/>
    <property type="gene ID" value="Os10g0547500"/>
</dbReference>
<dbReference type="KEGG" id="dosa:Os10g0547500"/>
<dbReference type="KEGG" id="osa:4349293"/>
<dbReference type="eggNOG" id="KOG2639">
    <property type="taxonomic scope" value="Eukaryota"/>
</dbReference>
<dbReference type="HOGENOM" id="CLU_011920_0_0_1"/>
<dbReference type="InParanoid" id="Q9AV23"/>
<dbReference type="OMA" id="MIREISW"/>
<dbReference type="OrthoDB" id="442352at2759"/>
<dbReference type="Proteomes" id="UP000000763">
    <property type="component" value="Chromosome 10"/>
</dbReference>
<dbReference type="Proteomes" id="UP000059680">
    <property type="component" value="Chromosome 10"/>
</dbReference>
<dbReference type="GO" id="GO:0016020">
    <property type="term" value="C:membrane"/>
    <property type="evidence" value="ECO:0000318"/>
    <property type="project" value="GO_Central"/>
</dbReference>
<dbReference type="GO" id="GO:0005886">
    <property type="term" value="C:plasma membrane"/>
    <property type="evidence" value="ECO:0007669"/>
    <property type="project" value="UniProtKB-SubCell"/>
</dbReference>
<dbReference type="GO" id="GO:0055085">
    <property type="term" value="P:transmembrane transport"/>
    <property type="evidence" value="ECO:0007669"/>
    <property type="project" value="InterPro"/>
</dbReference>
<dbReference type="CDD" id="cd01117">
    <property type="entry name" value="YbiR_permease"/>
    <property type="match status" value="1"/>
</dbReference>
<dbReference type="InterPro" id="IPR004680">
    <property type="entry name" value="Cit_transptr-like_dom"/>
</dbReference>
<dbReference type="PANTHER" id="PTHR43302:SF8">
    <property type="entry name" value="SILICON EFFLUX TRANSPORTER LSI3"/>
    <property type="match status" value="1"/>
</dbReference>
<dbReference type="PANTHER" id="PTHR43302">
    <property type="entry name" value="TRANSPORTER ARSB-RELATED"/>
    <property type="match status" value="1"/>
</dbReference>
<dbReference type="Pfam" id="PF03600">
    <property type="entry name" value="CitMHS"/>
    <property type="match status" value="1"/>
</dbReference>
<evidence type="ECO:0000255" key="1"/>
<evidence type="ECO:0000256" key="2">
    <source>
        <dbReference type="SAM" id="MobiDB-lite"/>
    </source>
</evidence>
<evidence type="ECO:0000269" key="3">
    <source>
    </source>
</evidence>
<evidence type="ECO:0000303" key="4">
    <source>
    </source>
</evidence>
<evidence type="ECO:0000305" key="5"/>
<evidence type="ECO:0000312" key="6">
    <source>
        <dbReference type="EMBL" id="AAK20045.1"/>
    </source>
</evidence>
<evidence type="ECO:0000312" key="7">
    <source>
        <dbReference type="EMBL" id="AAP54895.1"/>
    </source>
</evidence>
<evidence type="ECO:0000312" key="8">
    <source>
        <dbReference type="EMBL" id="BAF27134.1"/>
    </source>
</evidence>
<sequence>MALASLPKVVMGSVAFGVFWMLAVFPSVPFLPIGRTAGALLGAVLMIVFHVISADDAYASIDLPILGLLFATMVVGGYLKNAGMFRHLGRLLAWRSQGGRDLMCRVCVVTALASALFTNDTCCVVLTEFVLELAAERNLPAKPFLLALATSANIGSSATPIGNPQNLVIAFNSKISFISFLLGILPAMLAGMGINMLMLLCMYWKELDGGACSPDEVAAGKQMEAIEEGRRTALNNNKKDDGDAATPASPEDDDGGDAESMMSENISTKHRWFMQCSEHRRKLFLKSFAYVVTVGMLVAYMLGLNMSWTAITTAIALVVVDFRDAEPCLDKVSYSLLVFFSGMFVTVSGFNKTGLPGAIWNVMAPYSKINHVTGVTVLSVIILLLSNLASNVPTVLLMGDEVAAAAATISPAAVTRSWLLLAWVSTVAGNLSLLGSAANLIVCEQARRATRNAYDLTFWNHVIFGLPSTLVVTAIGIPLIGKINI</sequence>
<protein>
    <recommendedName>
        <fullName evidence="4">Silicon efflux transporter LSI3</fullName>
    </recommendedName>
    <alternativeName>
        <fullName evidence="4">Low silicon protein 3</fullName>
    </alternativeName>
</protein>
<reference key="1">
    <citation type="journal article" date="2015" name="Proc. Natl. Acad. Sci. U.S.A.">
        <title>Orchestration of three transporters and distinct vascular structures in node for intervascular transfer of silicon in rice.</title>
        <authorList>
            <person name="Yamaji N."/>
            <person name="Sakurai G."/>
            <person name="Mitani-Ueno N."/>
            <person name="Ma J.F."/>
        </authorList>
    </citation>
    <scope>NUCLEOTIDE SEQUENCE [MRNA]</scope>
    <scope>FUNCTION</scope>
    <scope>SUBCELLULAR LOCATION</scope>
    <source>
        <strain>cv. Nipponbare</strain>
    </source>
</reference>
<reference key="2">
    <citation type="journal article" date="2003" name="Science">
        <title>In-depth view of structure, activity, and evolution of rice chromosome 10.</title>
        <authorList>
            <person name="Yu Y."/>
            <person name="Rambo T."/>
            <person name="Currie J."/>
            <person name="Saski C."/>
            <person name="Kim H.-R."/>
            <person name="Collura K."/>
            <person name="Thompson S."/>
            <person name="Simmons J."/>
            <person name="Yang T.-J."/>
            <person name="Nah G."/>
            <person name="Patel A.J."/>
            <person name="Thurmond S."/>
            <person name="Henry D."/>
            <person name="Oates R."/>
            <person name="Palmer M."/>
            <person name="Pries G."/>
            <person name="Gibson J."/>
            <person name="Anderson H."/>
            <person name="Paradkar M."/>
            <person name="Crane L."/>
            <person name="Dale J."/>
            <person name="Carver M.B."/>
            <person name="Wood T."/>
            <person name="Frisch D."/>
            <person name="Engler F."/>
            <person name="Soderlund C."/>
            <person name="Palmer L.E."/>
            <person name="Teytelman L."/>
            <person name="Nascimento L."/>
            <person name="De la Bastide M."/>
            <person name="Spiegel L."/>
            <person name="Ware D."/>
            <person name="O'Shaughnessy A."/>
            <person name="Dike S."/>
            <person name="Dedhia N."/>
            <person name="Preston R."/>
            <person name="Huang E."/>
            <person name="Ferraro K."/>
            <person name="Kuit K."/>
            <person name="Miller B."/>
            <person name="Zutavern T."/>
            <person name="Katzenberger F."/>
            <person name="Muller S."/>
            <person name="Balija V."/>
            <person name="Martienssen R.A."/>
            <person name="Stein L."/>
            <person name="Minx P."/>
            <person name="Johnson D."/>
            <person name="Cordum H."/>
            <person name="Mardis E."/>
            <person name="Cheng Z."/>
            <person name="Jiang J."/>
            <person name="Wilson R."/>
            <person name="McCombie W.R."/>
            <person name="Wing R.A."/>
            <person name="Yuan Q."/>
            <person name="Ouyang S."/>
            <person name="Liu J."/>
            <person name="Jones K.M."/>
            <person name="Gansberger K."/>
            <person name="Moffat K."/>
            <person name="Hill J."/>
            <person name="Tsitrin T."/>
            <person name="Overton L."/>
            <person name="Bera J."/>
            <person name="Kim M."/>
            <person name="Jin S."/>
            <person name="Tallon L."/>
            <person name="Ciecko A."/>
            <person name="Pai G."/>
            <person name="Van Aken S."/>
            <person name="Utterback T."/>
            <person name="Reidmuller S."/>
            <person name="Bormann J."/>
            <person name="Feldblyum T."/>
            <person name="Hsiao J."/>
            <person name="Zismann V."/>
            <person name="Blunt S."/>
            <person name="de Vazeille A.R."/>
            <person name="Shaffer T."/>
            <person name="Koo H."/>
            <person name="Suh B."/>
            <person name="Yang Q."/>
            <person name="Haas B."/>
            <person name="Peterson J."/>
            <person name="Pertea M."/>
            <person name="Volfovsky N."/>
            <person name="Wortman J."/>
            <person name="White O."/>
            <person name="Salzberg S.L."/>
            <person name="Fraser C.M."/>
            <person name="Buell C.R."/>
            <person name="Messing J."/>
            <person name="Song R."/>
            <person name="Fuks G."/>
            <person name="Llaca V."/>
            <person name="Kovchak S."/>
            <person name="Young S."/>
            <person name="Bowers J.E."/>
            <person name="Paterson A.H."/>
            <person name="Johns M.A."/>
            <person name="Mao L."/>
            <person name="Pan H."/>
            <person name="Dean R.A."/>
        </authorList>
    </citation>
    <scope>NUCLEOTIDE SEQUENCE [LARGE SCALE GENOMIC DNA]</scope>
    <source>
        <strain>cv. Nipponbare</strain>
    </source>
</reference>
<reference key="3">
    <citation type="journal article" date="2005" name="Nature">
        <title>The map-based sequence of the rice genome.</title>
        <authorList>
            <consortium name="International rice genome sequencing project (IRGSP)"/>
        </authorList>
    </citation>
    <scope>NUCLEOTIDE SEQUENCE [LARGE SCALE GENOMIC DNA]</scope>
    <source>
        <strain>cv. Nipponbare</strain>
    </source>
</reference>
<reference key="4">
    <citation type="journal article" date="2008" name="Nucleic Acids Res.">
        <title>The rice annotation project database (RAP-DB): 2008 update.</title>
        <authorList>
            <consortium name="The rice annotation project (RAP)"/>
        </authorList>
    </citation>
    <scope>GENOME REANNOTATION</scope>
    <source>
        <strain>cv. Nipponbare</strain>
    </source>
</reference>
<reference key="5">
    <citation type="journal article" date="2013" name="Rice">
        <title>Improvement of the Oryza sativa Nipponbare reference genome using next generation sequence and optical map data.</title>
        <authorList>
            <person name="Kawahara Y."/>
            <person name="de la Bastide M."/>
            <person name="Hamilton J.P."/>
            <person name="Kanamori H."/>
            <person name="McCombie W.R."/>
            <person name="Ouyang S."/>
            <person name="Schwartz D.C."/>
            <person name="Tanaka T."/>
            <person name="Wu J."/>
            <person name="Zhou S."/>
            <person name="Childs K.L."/>
            <person name="Davidson R.M."/>
            <person name="Lin H."/>
            <person name="Quesada-Ocampo L."/>
            <person name="Vaillancourt B."/>
            <person name="Sakai H."/>
            <person name="Lee S.S."/>
            <person name="Kim J."/>
            <person name="Numa H."/>
            <person name="Itoh T."/>
            <person name="Buell C.R."/>
            <person name="Matsumoto T."/>
        </authorList>
    </citation>
    <scope>GENOME REANNOTATION</scope>
    <source>
        <strain>cv. Nipponbare</strain>
    </source>
</reference>
<reference key="6">
    <citation type="journal article" date="2003" name="Science">
        <title>Collection, mapping, and annotation of over 28,000 cDNA clones from japonica rice.</title>
        <authorList>
            <consortium name="The rice full-length cDNA consortium"/>
        </authorList>
    </citation>
    <scope>NUCLEOTIDE SEQUENCE [LARGE SCALE MRNA]</scope>
    <source>
        <strain>cv. Nipponbare</strain>
    </source>
</reference>
<comment type="function">
    <text evidence="3">Silicon efflux transporter involved in silicon transport in shoots. In the nodes, involved with LSI2 and NIP2-2/LSI6 in silicon intervascular transfer, which is required for the preferential distribution of silicon, such as hyperaccumulation of silicon in the husk. Silicon is beneficial to plant growth and helps plants to overcome abiotic and biotic stresses by preventing lodging (falling over) and increasing resistance to pests and diseases, as well as other stresses.</text>
</comment>
<comment type="subcellular location">
    <subcellularLocation>
        <location evidence="3">Cell membrane</location>
        <topology evidence="1">Multi-pass membrane protein</topology>
    </subcellularLocation>
</comment>
<comment type="similarity">
    <text evidence="5">Belongs to the arsenite-antimonite (ArsB) efflux (TC 2.A.45) family.</text>
</comment>
<proteinExistence type="evidence at transcript level"/>
<keyword id="KW-1003">Cell membrane</keyword>
<keyword id="KW-0472">Membrane</keyword>
<keyword id="KW-1185">Reference proteome</keyword>
<keyword id="KW-0812">Transmembrane</keyword>
<keyword id="KW-1133">Transmembrane helix</keyword>
<keyword id="KW-0813">Transport</keyword>
<gene>
    <name evidence="4" type="primary">LSI3</name>
    <name evidence="8" type="ordered locus">Os10g0547500</name>
    <name evidence="7" type="ordered locus">LOC_Os10g39980</name>
    <name evidence="6" type="ORF">OSJNBa0001O14.19</name>
</gene>
<organism>
    <name type="scientific">Oryza sativa subsp. japonica</name>
    <name type="common">Rice</name>
    <dbReference type="NCBI Taxonomy" id="39947"/>
    <lineage>
        <taxon>Eukaryota</taxon>
        <taxon>Viridiplantae</taxon>
        <taxon>Streptophyta</taxon>
        <taxon>Embryophyta</taxon>
        <taxon>Tracheophyta</taxon>
        <taxon>Spermatophyta</taxon>
        <taxon>Magnoliopsida</taxon>
        <taxon>Liliopsida</taxon>
        <taxon>Poales</taxon>
        <taxon>Poaceae</taxon>
        <taxon>BOP clade</taxon>
        <taxon>Oryzoideae</taxon>
        <taxon>Oryzeae</taxon>
        <taxon>Oryzinae</taxon>
        <taxon>Oryza</taxon>
        <taxon>Oryza sativa</taxon>
    </lineage>
</organism>
<accession>Q9AV23</accession>
<accession>Q7XCH8</accession>